<comment type="function">
    <text evidence="1">Catalyzes the synthesis of Und-PP-GlcNAc-ManNAcA (Lipid II), the second lipid-linked intermediate involved in enterobacterial common antigen (ECA) synthesis.</text>
</comment>
<comment type="catalytic activity">
    <reaction evidence="1">
        <text>UDP-N-acetyl-alpha-D-mannosaminouronate + N-acetyl-alpha-D-glucosaminyl-di-trans,octa-cis-undecaprenyl diphosphate = beta-D-ManNAcA-(1-&gt;4)-alpha-D-GlcNAc-di-trans,octa-cis-undecaprenyl diphosphate + UDP + H(+)</text>
        <dbReference type="Rhea" id="RHEA:28366"/>
        <dbReference type="ChEBI" id="CHEBI:15378"/>
        <dbReference type="ChEBI" id="CHEBI:58223"/>
        <dbReference type="ChEBI" id="CHEBI:61495"/>
        <dbReference type="ChEBI" id="CHEBI:62959"/>
        <dbReference type="ChEBI" id="CHEBI:70731"/>
        <dbReference type="EC" id="2.4.1.180"/>
    </reaction>
</comment>
<comment type="pathway">
    <text evidence="1">Bacterial outer membrane biogenesis; enterobacterial common antigen biosynthesis.</text>
</comment>
<comment type="similarity">
    <text evidence="1">Belongs to the glycosyltransferase 26 family.</text>
</comment>
<name>WECG_YERPY</name>
<protein>
    <recommendedName>
        <fullName evidence="1">UDP-N-acetyl-D-mannosaminuronic acid transferase</fullName>
        <shortName evidence="1">UDP-ManNAcA transferase</shortName>
        <ecNumber evidence="1">2.4.1.180</ecNumber>
    </recommendedName>
</protein>
<organism>
    <name type="scientific">Yersinia pseudotuberculosis serotype O:3 (strain YPIII)</name>
    <dbReference type="NCBI Taxonomy" id="502800"/>
    <lineage>
        <taxon>Bacteria</taxon>
        <taxon>Pseudomonadati</taxon>
        <taxon>Pseudomonadota</taxon>
        <taxon>Gammaproteobacteria</taxon>
        <taxon>Enterobacterales</taxon>
        <taxon>Yersiniaceae</taxon>
        <taxon>Yersinia</taxon>
    </lineage>
</organism>
<gene>
    <name evidence="1" type="primary">wecG</name>
    <name evidence="1" type="synonym">rffM</name>
    <name type="ordered locus">YPK_4022</name>
</gene>
<sequence length="246" mass="27646">MEPNTVIPKYNVRGFEIWGFRDMAQVLDHLLGSGPVKTGTLVAMNAEKLLKAEDDTALCELIKNAEYLYADGISMVRAIRRKYPQAELSRVAGADLWEALMQRAGQQGTPVFLVGGKPDVLAETEAKLRAQWNVNLVGSQDGYFTPEQREALFARIAASGAAIVTVAMGSPKQEIFMRDCRKFYPDALYMGVGGTYDVFTGHVKRAPKIWQNMGLEWLYRLLAQPSRIRRQLKLLKFVGYYYSGRL</sequence>
<accession>B1JPF1</accession>
<keyword id="KW-0328">Glycosyltransferase</keyword>
<keyword id="KW-0808">Transferase</keyword>
<evidence type="ECO:0000255" key="1">
    <source>
        <dbReference type="HAMAP-Rule" id="MF_01001"/>
    </source>
</evidence>
<proteinExistence type="inferred from homology"/>
<reference key="1">
    <citation type="submission" date="2008-02" db="EMBL/GenBank/DDBJ databases">
        <title>Complete sequence of Yersinia pseudotuberculosis YPIII.</title>
        <authorList>
            <consortium name="US DOE Joint Genome Institute"/>
            <person name="Copeland A."/>
            <person name="Lucas S."/>
            <person name="Lapidus A."/>
            <person name="Glavina del Rio T."/>
            <person name="Dalin E."/>
            <person name="Tice H."/>
            <person name="Bruce D."/>
            <person name="Goodwin L."/>
            <person name="Pitluck S."/>
            <person name="Munk A.C."/>
            <person name="Brettin T."/>
            <person name="Detter J.C."/>
            <person name="Han C."/>
            <person name="Tapia R."/>
            <person name="Schmutz J."/>
            <person name="Larimer F."/>
            <person name="Land M."/>
            <person name="Hauser L."/>
            <person name="Challacombe J.F."/>
            <person name="Green L."/>
            <person name="Lindler L.E."/>
            <person name="Nikolich M.P."/>
            <person name="Richardson P."/>
        </authorList>
    </citation>
    <scope>NUCLEOTIDE SEQUENCE [LARGE SCALE GENOMIC DNA]</scope>
    <source>
        <strain>YPIII</strain>
    </source>
</reference>
<feature type="chain" id="PRO_1000134593" description="UDP-N-acetyl-D-mannosaminuronic acid transferase">
    <location>
        <begin position="1"/>
        <end position="246"/>
    </location>
</feature>
<dbReference type="EC" id="2.4.1.180" evidence="1"/>
<dbReference type="EMBL" id="CP000950">
    <property type="protein sequence ID" value="ACA70284.1"/>
    <property type="molecule type" value="Genomic_DNA"/>
</dbReference>
<dbReference type="RefSeq" id="WP_011191504.1">
    <property type="nucleotide sequence ID" value="NZ_CP009792.1"/>
</dbReference>
<dbReference type="SMR" id="B1JPF1"/>
<dbReference type="CAZy" id="GT26">
    <property type="family name" value="Glycosyltransferase Family 26"/>
</dbReference>
<dbReference type="GeneID" id="49787845"/>
<dbReference type="KEGG" id="ypy:YPK_4022"/>
<dbReference type="PATRIC" id="fig|502800.11.peg.371"/>
<dbReference type="UniPathway" id="UPA00566"/>
<dbReference type="GO" id="GO:0047241">
    <property type="term" value="F:lipopolysaccharide N-acetylmannosaminouronosyltransferase activity"/>
    <property type="evidence" value="ECO:0007669"/>
    <property type="project" value="UniProtKB-UniRule"/>
</dbReference>
<dbReference type="GO" id="GO:0009246">
    <property type="term" value="P:enterobacterial common antigen biosynthetic process"/>
    <property type="evidence" value="ECO:0007669"/>
    <property type="project" value="UniProtKB-UniRule"/>
</dbReference>
<dbReference type="CDD" id="cd06533">
    <property type="entry name" value="Glyco_transf_WecG_TagA"/>
    <property type="match status" value="1"/>
</dbReference>
<dbReference type="HAMAP" id="MF_01001">
    <property type="entry name" value="WecG_RffM"/>
    <property type="match status" value="1"/>
</dbReference>
<dbReference type="InterPro" id="IPR023085">
    <property type="entry name" value="UDP-ManNAcA_Trfase_WecG"/>
</dbReference>
<dbReference type="InterPro" id="IPR004629">
    <property type="entry name" value="WecG_TagA_CpsF"/>
</dbReference>
<dbReference type="NCBIfam" id="NF002980">
    <property type="entry name" value="PRK03692.1"/>
    <property type="match status" value="1"/>
</dbReference>
<dbReference type="NCBIfam" id="TIGR00696">
    <property type="entry name" value="wecG_tagA_cpsF"/>
    <property type="match status" value="1"/>
</dbReference>
<dbReference type="PANTHER" id="PTHR34136">
    <property type="match status" value="1"/>
</dbReference>
<dbReference type="PANTHER" id="PTHR34136:SF1">
    <property type="entry name" value="UDP-N-ACETYL-D-MANNOSAMINURONIC ACID TRANSFERASE"/>
    <property type="match status" value="1"/>
</dbReference>
<dbReference type="Pfam" id="PF03808">
    <property type="entry name" value="Glyco_tran_WecG"/>
    <property type="match status" value="1"/>
</dbReference>